<organism evidence="15">
    <name type="scientific">Caenorhabditis elegans</name>
    <dbReference type="NCBI Taxonomy" id="6239"/>
    <lineage>
        <taxon>Eukaryota</taxon>
        <taxon>Metazoa</taxon>
        <taxon>Ecdysozoa</taxon>
        <taxon>Nematoda</taxon>
        <taxon>Chromadorea</taxon>
        <taxon>Rhabditida</taxon>
        <taxon>Rhabditina</taxon>
        <taxon>Rhabditomorpha</taxon>
        <taxon>Rhabditoidea</taxon>
        <taxon>Rhabditidae</taxon>
        <taxon>Peloderinae</taxon>
        <taxon>Caenorhabditis</taxon>
    </lineage>
</organism>
<gene>
    <name evidence="16" type="primary">sos-1</name>
    <name evidence="16" type="synonym">let-341</name>
    <name evidence="16" type="ORF">T28F12.3</name>
</gene>
<proteinExistence type="evidence at protein level"/>
<protein>
    <recommendedName>
        <fullName evidence="12">Son of sevenless homolog</fullName>
    </recommendedName>
    <alternativeName>
        <fullName evidence="13">Guanine nucleotide exchange factor for RAS</fullName>
    </alternativeName>
</protein>
<name>SOS_CAEEL</name>
<comment type="function">
    <text evidence="1 7 8 9 11">Promotes the exchange of Ras-bound GDP by GTP (By similarity). May regulate signaling pathways downstream of receptor tyrosine kinase, egl-15 and let-23 (PubMed:10880441). Required for larval and male spicule development, fluid homeostasis, vulva induction, spermatogenesis, and oogenesis by promoting meiosis prophase exit during oocyte maturation (PubMed:10880441, PubMed:17339331). Required for the delamination of G1 cell by promoting the loss of cell junctions and detachment from the excretory system during larval development (PubMed:25371363). Plays a role in nicotinic acetylcholine receptor (nAChR)-mediated sensitivity to nicotine (PubMed:15990870). Regulates synaptic levels of nAchR subunit lev-1 in the nerve cord (PubMed:15990870).</text>
</comment>
<comment type="subunit">
    <text evidence="10">Interacts with cmd-1 in the presence of Ca(2+).</text>
</comment>
<comment type="domain">
    <text evidence="9">The DH (DBL-homology) domain may inhibit the Ras-GEF domain, thereby preventing excessive let-60/Ras activation.</text>
</comment>
<comment type="disruption phenotype">
    <text evidence="7">RNAi-mediated knockdown results in 8% early larval lethality of the progeny. Surviving animals display slow growth, thin body morphology and both spermatogenesis and oogenesis are arrested at the pachytene stage of meiosis I. In addition, males have short and crumpled spicules. RNAi-mediated knockdown prevents multi-vulva induction in let60 n1046, let-23 sa62 or lin-15 n765 mutants and fluid accumulation in clr-1 e1745ts mutant.</text>
</comment>
<feature type="chain" id="PRO_0000435955" description="Son of sevenless homolog" evidence="13">
    <location>
        <begin position="1"/>
        <end position="1493"/>
    </location>
</feature>
<feature type="domain" description="DH" evidence="2">
    <location>
        <begin position="244"/>
        <end position="448"/>
    </location>
</feature>
<feature type="domain" description="PH" evidence="4">
    <location>
        <begin position="496"/>
        <end position="606"/>
    </location>
</feature>
<feature type="domain" description="N-terminal Ras-GEF" evidence="3">
    <location>
        <begin position="656"/>
        <end position="824"/>
    </location>
</feature>
<feature type="domain" description="Ras-GEF" evidence="5">
    <location>
        <begin position="897"/>
        <end position="1164"/>
    </location>
</feature>
<feature type="region of interest" description="Disordered" evidence="6">
    <location>
        <begin position="1067"/>
        <end position="1091"/>
    </location>
</feature>
<feature type="region of interest" description="Disordered" evidence="6">
    <location>
        <begin position="1165"/>
        <end position="1248"/>
    </location>
</feature>
<feature type="region of interest" description="Disordered" evidence="6">
    <location>
        <begin position="1263"/>
        <end position="1493"/>
    </location>
</feature>
<feature type="compositionally biased region" description="Basic and acidic residues" evidence="6">
    <location>
        <begin position="1079"/>
        <end position="1088"/>
    </location>
</feature>
<feature type="compositionally biased region" description="Polar residues" evidence="6">
    <location>
        <begin position="1208"/>
        <end position="1231"/>
    </location>
</feature>
<feature type="compositionally biased region" description="Polar residues" evidence="6">
    <location>
        <begin position="1279"/>
        <end position="1289"/>
    </location>
</feature>
<feature type="compositionally biased region" description="Low complexity" evidence="6">
    <location>
        <begin position="1308"/>
        <end position="1326"/>
    </location>
</feature>
<feature type="compositionally biased region" description="Polar residues" evidence="6">
    <location>
        <begin position="1350"/>
        <end position="1361"/>
    </location>
</feature>
<feature type="compositionally biased region" description="Low complexity" evidence="6">
    <location>
        <begin position="1381"/>
        <end position="1400"/>
    </location>
</feature>
<feature type="compositionally biased region" description="Basic and acidic residues" evidence="6">
    <location>
        <begin position="1402"/>
        <end position="1417"/>
    </location>
</feature>
<feature type="compositionally biased region" description="Pro residues" evidence="6">
    <location>
        <begin position="1426"/>
        <end position="1435"/>
    </location>
</feature>
<feature type="compositionally biased region" description="Polar residues" evidence="6">
    <location>
        <begin position="1453"/>
        <end position="1464"/>
    </location>
</feature>
<feature type="mutagenesis site" description="In sy262; restores normal vulva induction in let-23 sy-1 mutant." evidence="9">
    <original>G</original>
    <variation>R</variation>
    <location>
        <position position="322"/>
    </location>
</feature>
<feature type="mutagenesis site" description="In cs41; temperature sensitive mutant in which G1 cell fails to delaminate during the excretory system development." evidence="11">
    <original>E</original>
    <variation>K</variation>
    <location>
        <position position="980"/>
    </location>
</feature>
<keyword id="KW-0344">Guanine-nucleotide releasing factor</keyword>
<keyword id="KW-1185">Reference proteome</keyword>
<accession>Q9N5D3</accession>
<accession>Q9NBD3</accession>
<dbReference type="EMBL" id="BX284605">
    <property type="protein sequence ID" value="CCD72268.1"/>
    <property type="molecule type" value="Genomic_DNA"/>
</dbReference>
<dbReference type="EMBL" id="AF251308">
    <property type="protein sequence ID" value="AAF82360.1"/>
    <property type="molecule type" value="mRNA"/>
</dbReference>
<dbReference type="RefSeq" id="NP_504235.2">
    <property type="nucleotide sequence ID" value="NM_071834.5"/>
</dbReference>
<dbReference type="SMR" id="Q9N5D3"/>
<dbReference type="FunCoup" id="Q9N5D3">
    <property type="interactions" value="2867"/>
</dbReference>
<dbReference type="IntAct" id="Q9N5D3">
    <property type="interactions" value="2"/>
</dbReference>
<dbReference type="MINT" id="Q9N5D3"/>
<dbReference type="STRING" id="6239.T28F12.3.1"/>
<dbReference type="PaxDb" id="6239-T28F12.3"/>
<dbReference type="PeptideAtlas" id="Q9N5D3"/>
<dbReference type="EnsemblMetazoa" id="T28F12.3a.1">
    <property type="protein sequence ID" value="T28F12.3a.1"/>
    <property type="gene ID" value="WBGene00004947"/>
</dbReference>
<dbReference type="GeneID" id="178846"/>
<dbReference type="KEGG" id="cel:CELE_T28F12.3"/>
<dbReference type="UCSC" id="T28F12.3">
    <property type="organism name" value="c. elegans"/>
</dbReference>
<dbReference type="AGR" id="WB:WBGene00004947"/>
<dbReference type="CTD" id="178846"/>
<dbReference type="WormBase" id="T28F12.3a">
    <property type="protein sequence ID" value="CE36328"/>
    <property type="gene ID" value="WBGene00004947"/>
    <property type="gene designation" value="sos-1"/>
</dbReference>
<dbReference type="eggNOG" id="KOG3417">
    <property type="taxonomic scope" value="Eukaryota"/>
</dbReference>
<dbReference type="GeneTree" id="ENSGT00940000169087"/>
<dbReference type="HOGENOM" id="CLU_002744_0_0_1"/>
<dbReference type="InParanoid" id="Q9N5D3"/>
<dbReference type="OMA" id="WVARSIV"/>
<dbReference type="OrthoDB" id="546434at2759"/>
<dbReference type="PhylomeDB" id="Q9N5D3"/>
<dbReference type="Reactome" id="R-CEL-1433557">
    <property type="pathway name" value="Signaling by SCF-KIT"/>
</dbReference>
<dbReference type="Reactome" id="R-CEL-1433559">
    <property type="pathway name" value="Regulation of KIT signaling"/>
</dbReference>
<dbReference type="Reactome" id="R-CEL-179812">
    <property type="pathway name" value="GRB2 events in EGFR signaling"/>
</dbReference>
<dbReference type="Reactome" id="R-CEL-180336">
    <property type="pathway name" value="SHC1 events in EGFR signaling"/>
</dbReference>
<dbReference type="Reactome" id="R-CEL-186763">
    <property type="pathway name" value="Downstream signal transduction"/>
</dbReference>
<dbReference type="Reactome" id="R-CEL-193648">
    <property type="pathway name" value="NRAGE signals death through JNK"/>
</dbReference>
<dbReference type="Reactome" id="R-CEL-1963640">
    <property type="pathway name" value="GRB2 events in ERBB2 signaling"/>
</dbReference>
<dbReference type="Reactome" id="R-CEL-2179392">
    <property type="pathway name" value="EGFR Transactivation by Gastrin"/>
</dbReference>
<dbReference type="Reactome" id="R-CEL-354194">
    <property type="pathway name" value="GRB2:SOS provides linkage to MAPK signaling for Integrins"/>
</dbReference>
<dbReference type="Reactome" id="R-CEL-375165">
    <property type="pathway name" value="NCAM signaling for neurite out-growth"/>
</dbReference>
<dbReference type="Reactome" id="R-CEL-416482">
    <property type="pathway name" value="G alpha (12/13) signalling events"/>
</dbReference>
<dbReference type="Reactome" id="R-CEL-5654688">
    <property type="pathway name" value="SHC-mediated cascade:FGFR1"/>
</dbReference>
<dbReference type="Reactome" id="R-CEL-5654693">
    <property type="pathway name" value="FRS-mediated FGFR1 signaling"/>
</dbReference>
<dbReference type="Reactome" id="R-CEL-5654699">
    <property type="pathway name" value="SHC-mediated cascade:FGFR2"/>
</dbReference>
<dbReference type="Reactome" id="R-CEL-5654700">
    <property type="pathway name" value="FRS-mediated FGFR2 signaling"/>
</dbReference>
<dbReference type="Reactome" id="R-CEL-5654704">
    <property type="pathway name" value="SHC-mediated cascade:FGFR3"/>
</dbReference>
<dbReference type="Reactome" id="R-CEL-5654706">
    <property type="pathway name" value="FRS-mediated FGFR3 signaling"/>
</dbReference>
<dbReference type="Reactome" id="R-CEL-5654712">
    <property type="pathway name" value="FRS-mediated FGFR4 signaling"/>
</dbReference>
<dbReference type="Reactome" id="R-CEL-5654719">
    <property type="pathway name" value="SHC-mediated cascade:FGFR4"/>
</dbReference>
<dbReference type="Reactome" id="R-CEL-5673001">
    <property type="pathway name" value="RAF/MAP kinase cascade"/>
</dbReference>
<dbReference type="Reactome" id="R-CEL-74751">
    <property type="pathway name" value="Insulin receptor signalling cascade"/>
</dbReference>
<dbReference type="Reactome" id="R-CEL-8851805">
    <property type="pathway name" value="MET activates RAS signaling"/>
</dbReference>
<dbReference type="Reactome" id="R-CEL-9013149">
    <property type="pathway name" value="RAC1 GTPase cycle"/>
</dbReference>
<dbReference type="Reactome" id="R-CEL-9607240">
    <property type="pathway name" value="FLT3 Signaling"/>
</dbReference>
<dbReference type="SignaLink" id="Q9N5D3"/>
<dbReference type="PRO" id="PR:Q9N5D3"/>
<dbReference type="Proteomes" id="UP000001940">
    <property type="component" value="Chromosome V"/>
</dbReference>
<dbReference type="Bgee" id="WBGene00004947">
    <property type="expression patterns" value="Expressed in pharyngeal muscle cell (C elegans) and 3 other cell types or tissues"/>
</dbReference>
<dbReference type="ExpressionAtlas" id="Q9N5D3">
    <property type="expression patterns" value="baseline and differential"/>
</dbReference>
<dbReference type="GO" id="GO:0005886">
    <property type="term" value="C:plasma membrane"/>
    <property type="evidence" value="ECO:0000318"/>
    <property type="project" value="GO_Central"/>
</dbReference>
<dbReference type="GO" id="GO:0005085">
    <property type="term" value="F:guanyl-nucleotide exchange factor activity"/>
    <property type="evidence" value="ECO:0000250"/>
    <property type="project" value="WormBase"/>
</dbReference>
<dbReference type="GO" id="GO:0046982">
    <property type="term" value="F:protein heterodimerization activity"/>
    <property type="evidence" value="ECO:0007669"/>
    <property type="project" value="InterPro"/>
</dbReference>
<dbReference type="GO" id="GO:0016477">
    <property type="term" value="P:cell migration"/>
    <property type="evidence" value="ECO:0000315"/>
    <property type="project" value="WormBase"/>
</dbReference>
<dbReference type="GO" id="GO:0009792">
    <property type="term" value="P:embryo development ending in birth or egg hatching"/>
    <property type="evidence" value="ECO:0000315"/>
    <property type="project" value="WormBase"/>
</dbReference>
<dbReference type="GO" id="GO:0007173">
    <property type="term" value="P:epidermal growth factor receptor signaling pathway"/>
    <property type="evidence" value="ECO:0000316"/>
    <property type="project" value="WormBase"/>
</dbReference>
<dbReference type="GO" id="GO:0007292">
    <property type="term" value="P:female gamete generation"/>
    <property type="evidence" value="ECO:0000315"/>
    <property type="project" value="WormBase"/>
</dbReference>
<dbReference type="GO" id="GO:0040026">
    <property type="term" value="P:positive regulation of vulval development"/>
    <property type="evidence" value="ECO:0000316"/>
    <property type="project" value="WormBase"/>
</dbReference>
<dbReference type="GO" id="GO:0007265">
    <property type="term" value="P:Ras protein signal transduction"/>
    <property type="evidence" value="ECO:0000318"/>
    <property type="project" value="GO_Central"/>
</dbReference>
<dbReference type="CDD" id="cd00155">
    <property type="entry name" value="RasGEF"/>
    <property type="match status" value="1"/>
</dbReference>
<dbReference type="CDD" id="cd06224">
    <property type="entry name" value="REM"/>
    <property type="match status" value="1"/>
</dbReference>
<dbReference type="Gene3D" id="6.10.250.3060">
    <property type="match status" value="1"/>
</dbReference>
<dbReference type="Gene3D" id="1.20.900.10">
    <property type="entry name" value="Dbl homology (DH) domain"/>
    <property type="match status" value="1"/>
</dbReference>
<dbReference type="Gene3D" id="1.10.20.10">
    <property type="entry name" value="Histone, subunit A"/>
    <property type="match status" value="1"/>
</dbReference>
<dbReference type="Gene3D" id="2.30.29.30">
    <property type="entry name" value="Pleckstrin-homology domain (PH domain)/Phosphotyrosine-binding domain (PTB)"/>
    <property type="match status" value="1"/>
</dbReference>
<dbReference type="Gene3D" id="1.10.840.10">
    <property type="entry name" value="Ras guanine-nucleotide exchange factors catalytic domain"/>
    <property type="match status" value="2"/>
</dbReference>
<dbReference type="Gene3D" id="1.20.870.10">
    <property type="entry name" value="Son of sevenless (SoS) protein Chain: S domain 1"/>
    <property type="match status" value="1"/>
</dbReference>
<dbReference type="InterPro" id="IPR035899">
    <property type="entry name" value="DBL_dom_sf"/>
</dbReference>
<dbReference type="InterPro" id="IPR000219">
    <property type="entry name" value="DH_dom"/>
</dbReference>
<dbReference type="InterPro" id="IPR009072">
    <property type="entry name" value="Histone-fold"/>
</dbReference>
<dbReference type="InterPro" id="IPR011993">
    <property type="entry name" value="PH-like_dom_sf"/>
</dbReference>
<dbReference type="InterPro" id="IPR001849">
    <property type="entry name" value="PH_domain"/>
</dbReference>
<dbReference type="InterPro" id="IPR008937">
    <property type="entry name" value="Ras-like_GEF"/>
</dbReference>
<dbReference type="InterPro" id="IPR000651">
    <property type="entry name" value="Ras-like_Gua-exchang_fac_N"/>
</dbReference>
<dbReference type="InterPro" id="IPR023578">
    <property type="entry name" value="Ras_GEF_dom_sf"/>
</dbReference>
<dbReference type="InterPro" id="IPR001895">
    <property type="entry name" value="RASGEF_cat_dom"/>
</dbReference>
<dbReference type="InterPro" id="IPR036964">
    <property type="entry name" value="RASGEF_cat_dom_sf"/>
</dbReference>
<dbReference type="InterPro" id="IPR055251">
    <property type="entry name" value="SOS1_NGEF_PH"/>
</dbReference>
<dbReference type="PANTHER" id="PTHR23113">
    <property type="entry name" value="GUANINE NUCLEOTIDE EXCHANGE FACTOR"/>
    <property type="match status" value="1"/>
</dbReference>
<dbReference type="PANTHER" id="PTHR23113:SF363">
    <property type="entry name" value="PROTEIN SON OF SEVENLESS"/>
    <property type="match status" value="1"/>
</dbReference>
<dbReference type="Pfam" id="PF00617">
    <property type="entry name" value="RasGEF"/>
    <property type="match status" value="1"/>
</dbReference>
<dbReference type="Pfam" id="PF00618">
    <property type="entry name" value="RasGEF_N"/>
    <property type="match status" value="1"/>
</dbReference>
<dbReference type="Pfam" id="PF22697">
    <property type="entry name" value="SOS1_NGEF_PH"/>
    <property type="match status" value="1"/>
</dbReference>
<dbReference type="SMART" id="SM00233">
    <property type="entry name" value="PH"/>
    <property type="match status" value="1"/>
</dbReference>
<dbReference type="SMART" id="SM00147">
    <property type="entry name" value="RasGEF"/>
    <property type="match status" value="1"/>
</dbReference>
<dbReference type="SMART" id="SM00229">
    <property type="entry name" value="RasGEFN"/>
    <property type="match status" value="1"/>
</dbReference>
<dbReference type="SMART" id="SM00325">
    <property type="entry name" value="RhoGEF"/>
    <property type="match status" value="1"/>
</dbReference>
<dbReference type="SUPFAM" id="SSF48065">
    <property type="entry name" value="DBL homology domain (DH-domain)"/>
    <property type="match status" value="1"/>
</dbReference>
<dbReference type="SUPFAM" id="SSF47113">
    <property type="entry name" value="Histone-fold"/>
    <property type="match status" value="1"/>
</dbReference>
<dbReference type="SUPFAM" id="SSF50729">
    <property type="entry name" value="PH domain-like"/>
    <property type="match status" value="1"/>
</dbReference>
<dbReference type="SUPFAM" id="SSF48366">
    <property type="entry name" value="Ras GEF"/>
    <property type="match status" value="1"/>
</dbReference>
<dbReference type="PROSITE" id="PS50010">
    <property type="entry name" value="DH_2"/>
    <property type="match status" value="1"/>
</dbReference>
<dbReference type="PROSITE" id="PS50003">
    <property type="entry name" value="PH_DOMAIN"/>
    <property type="match status" value="1"/>
</dbReference>
<dbReference type="PROSITE" id="PS50009">
    <property type="entry name" value="RASGEF_CAT"/>
    <property type="match status" value="1"/>
</dbReference>
<dbReference type="PROSITE" id="PS50212">
    <property type="entry name" value="RASGEF_NTER"/>
    <property type="match status" value="1"/>
</dbReference>
<reference evidence="15" key="1">
    <citation type="journal article" date="1998" name="Science">
        <title>Genome sequence of the nematode C. elegans: a platform for investigating biology.</title>
        <authorList>
            <consortium name="The C. elegans sequencing consortium"/>
        </authorList>
    </citation>
    <scope>NUCLEOTIDE SEQUENCE [LARGE SCALE GENOMIC DNA]</scope>
    <source>
        <strain evidence="15">Bristol N2</strain>
    </source>
</reference>
<reference evidence="14" key="2">
    <citation type="journal article" date="2000" name="EMBO J.">
        <title>Caenorhabditis elegans SOS-1 is necessary for multiple RAS-mediated developmental signals.</title>
        <authorList>
            <person name="Chang C."/>
            <person name="Hopper N.A."/>
            <person name="Sternberg P.W."/>
        </authorList>
    </citation>
    <scope>NUCLEOTIDE SEQUENCE [MRNA] OF 1-1413</scope>
    <scope>FUNCTION</scope>
    <scope>DISRUPTION PHENOTYPE</scope>
</reference>
<reference evidence="13" key="3">
    <citation type="journal article" date="2005" name="EMBO J.">
        <title>Identification and characterization of novel nicotinic receptor-associated proteins in Caenorhabditis elegans.</title>
        <authorList>
            <person name="Gottschalk A."/>
            <person name="Almedom R.B."/>
            <person name="Schedletzky T."/>
            <person name="Anderson S.D."/>
            <person name="Yates J.R. III"/>
            <person name="Schafer W.R."/>
        </authorList>
    </citation>
    <scope>FUNCTION</scope>
</reference>
<reference evidence="13" key="4">
    <citation type="journal article" date="2007" name="Mol. Cell. Biol.">
        <title>An activating mutation in sos-1 identifies its Dbl domain as a critical inhibitor of the epidermal growth factor receptor pathway during Caenorhabditis elegans vulval development.</title>
        <authorList>
            <person name="Modzelewska K."/>
            <person name="Elgort M.G."/>
            <person name="Huang J."/>
            <person name="Jongeward G."/>
            <person name="Lauritzen A."/>
            <person name="Yoon C.H."/>
            <person name="Sternberg P.W."/>
            <person name="Moghal N."/>
        </authorList>
    </citation>
    <scope>FUNCTION</scope>
    <scope>DOMAIN</scope>
    <scope>MUTAGENESIS OF GLY-322</scope>
</reference>
<reference evidence="13" key="5">
    <citation type="journal article" date="2008" name="Cell Calcium">
        <title>Ca(2+)/Calmodulin-binding proteins from the C. elegans proteome.</title>
        <authorList>
            <person name="Shen X."/>
            <person name="Valencia C.A."/>
            <person name="Gao W."/>
            <person name="Cotten S.W."/>
            <person name="Dong B."/>
            <person name="Huang B.C."/>
            <person name="Liu R."/>
        </authorList>
    </citation>
    <scope>INTERACTION WITH CMD-1</scope>
</reference>
<reference evidence="13" key="6">
    <citation type="journal article" date="2014" name="Development">
        <title>A non-cell-autonomous role for Ras signaling in C. elegans neuroblast delamination.</title>
        <authorList>
            <person name="Parry J.M."/>
            <person name="Sundaram M.V."/>
        </authorList>
    </citation>
    <scope>FUNCTION</scope>
    <scope>MUTAGENESIS OF GLU-980</scope>
</reference>
<evidence type="ECO:0000250" key="1">
    <source>
        <dbReference type="UniProtKB" id="Q62245"/>
    </source>
</evidence>
<evidence type="ECO:0000255" key="2">
    <source>
        <dbReference type="PROSITE-ProRule" id="PRU00062"/>
    </source>
</evidence>
<evidence type="ECO:0000255" key="3">
    <source>
        <dbReference type="PROSITE-ProRule" id="PRU00135"/>
    </source>
</evidence>
<evidence type="ECO:0000255" key="4">
    <source>
        <dbReference type="PROSITE-ProRule" id="PRU00145"/>
    </source>
</evidence>
<evidence type="ECO:0000255" key="5">
    <source>
        <dbReference type="PROSITE-ProRule" id="PRU00168"/>
    </source>
</evidence>
<evidence type="ECO:0000256" key="6">
    <source>
        <dbReference type="SAM" id="MobiDB-lite"/>
    </source>
</evidence>
<evidence type="ECO:0000269" key="7">
    <source>
    </source>
</evidence>
<evidence type="ECO:0000269" key="8">
    <source>
    </source>
</evidence>
<evidence type="ECO:0000269" key="9">
    <source>
    </source>
</evidence>
<evidence type="ECO:0000269" key="10">
    <source>
    </source>
</evidence>
<evidence type="ECO:0000269" key="11">
    <source>
    </source>
</evidence>
<evidence type="ECO:0000303" key="12">
    <source>
    </source>
</evidence>
<evidence type="ECO:0000305" key="13"/>
<evidence type="ECO:0000312" key="14">
    <source>
        <dbReference type="EMBL" id="AAF82360.1"/>
    </source>
</evidence>
<evidence type="ECO:0000312" key="15">
    <source>
        <dbReference type="Proteomes" id="UP000001940"/>
    </source>
</evidence>
<evidence type="ECO:0000312" key="16">
    <source>
        <dbReference type="WormBase" id="T28F12.3a"/>
    </source>
</evidence>
<sequence length="1493" mass="169916">MSIMSISLHSASSDTVSLTSRRTISTSKHWAAIFDERIYQICNIVHPGLPIDNAAVEHIRYFLQSIVFELIEARATSVVEVDKTAKKLFAFGLQTVCKEAWDNMHQQLQKHKYQKALKTVLESQHRLAAVIKETLGPREKEKKDREKKEIERIACYIYYACESVTEDVLRLTGNYVKNIRNSEQKITMANLDVAMNGDKALMELRTKLRNEEEAESPGGFGFLSEFEEFVAEETEEKTLSNSQTYESVAVDFLRDERRFIRELNRINVFRRRIESVAATDVDKQIVCNLFGNLTEIHDLALKIERTLEDAIELSDTQCIGMGIWEHGEAYEFDTYTFYIRRDGGEMNETRHATYVINDNIKALLESERFASLFQSGEHYLGSSLDGQSFRLAVQYVLPQLLHIPIFHIYQYHEYITRLHQLSSSEEDRRDLNDCRSAFERVVGCVSDMSPELKTKITQFLDQQAKSEKIYNVKRLNEIQSSIDGFTGSPIGKTCNELEKDGDLGMIRPSLQFSSEITKNKKWKTERFVYIFDQMIVLCKRHRNTLKFKDRLAVHSIDVFDIPDSEVTNCFKIESHDKSSLPKIYHFVCKNPEEKRQWMAVLVKVTTKSVLDRILDNHEKEEAKRIPLVVPGPDQYRFSEPDTEDNISFEDYTSSSGIPVIKCGTVLKLIERLTYHSYTDSKYILTFLISYRSFCTPNDLFSLLLERFNIPTPKKLQQPKQGGGPLAGRYDTVQSHGLSAISSSSCINPLCEQKFRKEFQQPIQLRVLSVINQWVKLHWYDFQCDPVLLDALELFLNRCCDPREGLSKQHKKFCKTILALIEKRVKNPPGIMQQPNENGDKGAADEGHVNSAFVFGDDQQHPPQHQVYTNESPKETNQVLWHTAQKGDVDHYDLLTLHPIEIGRQLTLLHSDLYRAIQPIELVEAAWTKAEKWRKSPQLLRLTDHSTLLTYWVSRSIVETESLEERMAMFNRVLEVMSVFEELHNFTGLVAFYSALNSSCIFRLKWCWDGLDNEKKKCFDRFNTLCERRWQEMQKRLSSINPPCIPFFGHYLSNIYFLEQGNSTFVNKSPPHGAAGAQKQQKDDLKASDPENSNKQFKQLVSFLKLRKISNVIREIQIFQDQRYSLTLEPTIRQFFESINPKNDFKSNEDLEEYLYNKSLEIQPKGLDTPTAELKPKHNASTLRSPGVKPPKAAGNHYSANHPIGLHLHSQNSHSAPHAMSSQSSTVPNTPLSAHETKRSLSHNQDDAPLQQFVDIRFERKGTHPKIPVLQPPPLLPRSSRANQSNSVSLPPTTQAPMPPAPKSSGMMSTATSPTTLTTTTTPSSAGGPPPKLHPRRMTQQPMSPLAKSPLTPSRDNSSPSAFQFPVVYEASTAPPLPPRPSTSSDVSSSPSTSGSTSSATKENQEQLRVIFDREESHSPTVRLSVPLPPALPPPRGSSVFRAPPPLPPKSNRHNSNSPTLSSEQPFEDPMSPSIFVNTPPPPLPPKTYRSSNK</sequence>